<sequence length="394" mass="43391">MAKEKFERSKPHVNVGTIGHVDHGKTTLTAAITKVMAEKNGGMARKFDEIDSAPEEKARGITINTSHVEYESPNRHYAHVDCPGHADYVKNMITGAAQMDGAILVCSAADGPMPQTREHILLSRQVGVPKIVVFLNKCDMVDDEELLELVEMEVRELLDQYEFPGDDTPVIMGSALRAIEGDEAYVEKIVELVQAMDDYIPAPERDTEKPFILPIEDVFSISGRGTVVTGRIERGVVNVGDEVEVVGIRPTQKTTVTGVEMFRKLLDRGEAGDNVGILVRGLKRDDVERGQVLCKPGSIKPHTKFEAEVYVLSKEEGGRHTPFFKGYRPQFYFRTTDITGAVELPEGVEMVMPGDNVKMTITLINPIAMDEGLRFAIREGGRTVGAGVVAKIIE</sequence>
<feature type="chain" id="PRO_1000095063" description="Elongation factor Tu">
    <location>
        <begin position="1"/>
        <end position="394"/>
    </location>
</feature>
<feature type="domain" description="tr-type G">
    <location>
        <begin position="10"/>
        <end position="204"/>
    </location>
</feature>
<feature type="region of interest" description="G1" evidence="1">
    <location>
        <begin position="19"/>
        <end position="26"/>
    </location>
</feature>
<feature type="region of interest" description="G2" evidence="1">
    <location>
        <begin position="60"/>
        <end position="64"/>
    </location>
</feature>
<feature type="region of interest" description="G3" evidence="1">
    <location>
        <begin position="81"/>
        <end position="84"/>
    </location>
</feature>
<feature type="region of interest" description="G4" evidence="1">
    <location>
        <begin position="136"/>
        <end position="139"/>
    </location>
</feature>
<feature type="region of interest" description="G5" evidence="1">
    <location>
        <begin position="174"/>
        <end position="176"/>
    </location>
</feature>
<feature type="binding site" evidence="2">
    <location>
        <begin position="19"/>
        <end position="26"/>
    </location>
    <ligand>
        <name>GTP</name>
        <dbReference type="ChEBI" id="CHEBI:37565"/>
    </ligand>
</feature>
<feature type="binding site" evidence="2">
    <location>
        <position position="26"/>
    </location>
    <ligand>
        <name>Mg(2+)</name>
        <dbReference type="ChEBI" id="CHEBI:18420"/>
    </ligand>
</feature>
<feature type="binding site" evidence="2">
    <location>
        <begin position="81"/>
        <end position="85"/>
    </location>
    <ligand>
        <name>GTP</name>
        <dbReference type="ChEBI" id="CHEBI:37565"/>
    </ligand>
</feature>
<feature type="binding site" evidence="2">
    <location>
        <begin position="136"/>
        <end position="139"/>
    </location>
    <ligand>
        <name>GTP</name>
        <dbReference type="ChEBI" id="CHEBI:37565"/>
    </ligand>
</feature>
<keyword id="KW-0963">Cytoplasm</keyword>
<keyword id="KW-0251">Elongation factor</keyword>
<keyword id="KW-0342">GTP-binding</keyword>
<keyword id="KW-0378">Hydrolase</keyword>
<keyword id="KW-0460">Magnesium</keyword>
<keyword id="KW-0479">Metal-binding</keyword>
<keyword id="KW-0547">Nucleotide-binding</keyword>
<keyword id="KW-0648">Protein biosynthesis</keyword>
<proteinExistence type="inferred from homology"/>
<protein>
    <recommendedName>
        <fullName evidence="2">Elongation factor Tu</fullName>
        <shortName evidence="2">EF-Tu</shortName>
        <ecNumber evidence="2">3.6.5.3</ecNumber>
    </recommendedName>
</protein>
<dbReference type="EC" id="3.6.5.3" evidence="2"/>
<dbReference type="EMBL" id="CP000915">
    <property type="protein sequence ID" value="ACD30282.1"/>
    <property type="molecule type" value="Genomic_DNA"/>
</dbReference>
<dbReference type="SMR" id="B2SFC9"/>
<dbReference type="KEGG" id="ftm:FTM_0201"/>
<dbReference type="HOGENOM" id="CLU_007265_0_0_6"/>
<dbReference type="GO" id="GO:0005829">
    <property type="term" value="C:cytosol"/>
    <property type="evidence" value="ECO:0007669"/>
    <property type="project" value="TreeGrafter"/>
</dbReference>
<dbReference type="GO" id="GO:0005525">
    <property type="term" value="F:GTP binding"/>
    <property type="evidence" value="ECO:0007669"/>
    <property type="project" value="UniProtKB-UniRule"/>
</dbReference>
<dbReference type="GO" id="GO:0003924">
    <property type="term" value="F:GTPase activity"/>
    <property type="evidence" value="ECO:0007669"/>
    <property type="project" value="InterPro"/>
</dbReference>
<dbReference type="GO" id="GO:0097216">
    <property type="term" value="F:guanosine tetraphosphate binding"/>
    <property type="evidence" value="ECO:0007669"/>
    <property type="project" value="UniProtKB-ARBA"/>
</dbReference>
<dbReference type="GO" id="GO:0003746">
    <property type="term" value="F:translation elongation factor activity"/>
    <property type="evidence" value="ECO:0007669"/>
    <property type="project" value="UniProtKB-UniRule"/>
</dbReference>
<dbReference type="CDD" id="cd01884">
    <property type="entry name" value="EF_Tu"/>
    <property type="match status" value="1"/>
</dbReference>
<dbReference type="CDD" id="cd03697">
    <property type="entry name" value="EFTU_II"/>
    <property type="match status" value="1"/>
</dbReference>
<dbReference type="CDD" id="cd03707">
    <property type="entry name" value="EFTU_III"/>
    <property type="match status" value="1"/>
</dbReference>
<dbReference type="FunFam" id="2.40.30.10:FF:000001">
    <property type="entry name" value="Elongation factor Tu"/>
    <property type="match status" value="1"/>
</dbReference>
<dbReference type="FunFam" id="3.40.50.300:FF:000003">
    <property type="entry name" value="Elongation factor Tu"/>
    <property type="match status" value="1"/>
</dbReference>
<dbReference type="Gene3D" id="3.40.50.300">
    <property type="entry name" value="P-loop containing nucleotide triphosphate hydrolases"/>
    <property type="match status" value="1"/>
</dbReference>
<dbReference type="Gene3D" id="2.40.30.10">
    <property type="entry name" value="Translation factors"/>
    <property type="match status" value="2"/>
</dbReference>
<dbReference type="HAMAP" id="MF_00118_B">
    <property type="entry name" value="EF_Tu_B"/>
    <property type="match status" value="1"/>
</dbReference>
<dbReference type="InterPro" id="IPR041709">
    <property type="entry name" value="EF-Tu_GTP-bd"/>
</dbReference>
<dbReference type="InterPro" id="IPR050055">
    <property type="entry name" value="EF-Tu_GTPase"/>
</dbReference>
<dbReference type="InterPro" id="IPR004161">
    <property type="entry name" value="EFTu-like_2"/>
</dbReference>
<dbReference type="InterPro" id="IPR033720">
    <property type="entry name" value="EFTU_2"/>
</dbReference>
<dbReference type="InterPro" id="IPR031157">
    <property type="entry name" value="G_TR_CS"/>
</dbReference>
<dbReference type="InterPro" id="IPR027417">
    <property type="entry name" value="P-loop_NTPase"/>
</dbReference>
<dbReference type="InterPro" id="IPR005225">
    <property type="entry name" value="Small_GTP-bd"/>
</dbReference>
<dbReference type="InterPro" id="IPR000795">
    <property type="entry name" value="T_Tr_GTP-bd_dom"/>
</dbReference>
<dbReference type="InterPro" id="IPR009000">
    <property type="entry name" value="Transl_B-barrel_sf"/>
</dbReference>
<dbReference type="InterPro" id="IPR009001">
    <property type="entry name" value="Transl_elong_EF1A/Init_IF2_C"/>
</dbReference>
<dbReference type="InterPro" id="IPR004541">
    <property type="entry name" value="Transl_elong_EFTu/EF1A_bac/org"/>
</dbReference>
<dbReference type="InterPro" id="IPR004160">
    <property type="entry name" value="Transl_elong_EFTu/EF1A_C"/>
</dbReference>
<dbReference type="NCBIfam" id="TIGR00485">
    <property type="entry name" value="EF-Tu"/>
    <property type="match status" value="1"/>
</dbReference>
<dbReference type="NCBIfam" id="NF000766">
    <property type="entry name" value="PRK00049.1"/>
    <property type="match status" value="1"/>
</dbReference>
<dbReference type="NCBIfam" id="NF009372">
    <property type="entry name" value="PRK12735.1"/>
    <property type="match status" value="1"/>
</dbReference>
<dbReference type="NCBIfam" id="NF009373">
    <property type="entry name" value="PRK12736.1"/>
    <property type="match status" value="1"/>
</dbReference>
<dbReference type="NCBIfam" id="TIGR00231">
    <property type="entry name" value="small_GTP"/>
    <property type="match status" value="1"/>
</dbReference>
<dbReference type="PANTHER" id="PTHR43721:SF22">
    <property type="entry name" value="ELONGATION FACTOR TU, MITOCHONDRIAL"/>
    <property type="match status" value="1"/>
</dbReference>
<dbReference type="PANTHER" id="PTHR43721">
    <property type="entry name" value="ELONGATION FACTOR TU-RELATED"/>
    <property type="match status" value="1"/>
</dbReference>
<dbReference type="Pfam" id="PF00009">
    <property type="entry name" value="GTP_EFTU"/>
    <property type="match status" value="1"/>
</dbReference>
<dbReference type="Pfam" id="PF03144">
    <property type="entry name" value="GTP_EFTU_D2"/>
    <property type="match status" value="1"/>
</dbReference>
<dbReference type="Pfam" id="PF03143">
    <property type="entry name" value="GTP_EFTU_D3"/>
    <property type="match status" value="1"/>
</dbReference>
<dbReference type="PRINTS" id="PR00315">
    <property type="entry name" value="ELONGATNFCT"/>
</dbReference>
<dbReference type="SUPFAM" id="SSF50465">
    <property type="entry name" value="EF-Tu/eEF-1alpha/eIF2-gamma C-terminal domain"/>
    <property type="match status" value="1"/>
</dbReference>
<dbReference type="SUPFAM" id="SSF52540">
    <property type="entry name" value="P-loop containing nucleoside triphosphate hydrolases"/>
    <property type="match status" value="1"/>
</dbReference>
<dbReference type="SUPFAM" id="SSF50447">
    <property type="entry name" value="Translation proteins"/>
    <property type="match status" value="1"/>
</dbReference>
<dbReference type="PROSITE" id="PS00301">
    <property type="entry name" value="G_TR_1"/>
    <property type="match status" value="1"/>
</dbReference>
<dbReference type="PROSITE" id="PS51722">
    <property type="entry name" value="G_TR_2"/>
    <property type="match status" value="1"/>
</dbReference>
<evidence type="ECO:0000250" key="1"/>
<evidence type="ECO:0000255" key="2">
    <source>
        <dbReference type="HAMAP-Rule" id="MF_00118"/>
    </source>
</evidence>
<organism>
    <name type="scientific">Francisella tularensis subsp. mediasiatica (strain FSC147)</name>
    <dbReference type="NCBI Taxonomy" id="441952"/>
    <lineage>
        <taxon>Bacteria</taxon>
        <taxon>Pseudomonadati</taxon>
        <taxon>Pseudomonadota</taxon>
        <taxon>Gammaproteobacteria</taxon>
        <taxon>Thiotrichales</taxon>
        <taxon>Francisellaceae</taxon>
        <taxon>Francisella</taxon>
    </lineage>
</organism>
<accession>B2SFC9</accession>
<comment type="function">
    <text evidence="2">GTP hydrolase that promotes the GTP-dependent binding of aminoacyl-tRNA to the A-site of ribosomes during protein biosynthesis.</text>
</comment>
<comment type="catalytic activity">
    <reaction evidence="2">
        <text>GTP + H2O = GDP + phosphate + H(+)</text>
        <dbReference type="Rhea" id="RHEA:19669"/>
        <dbReference type="ChEBI" id="CHEBI:15377"/>
        <dbReference type="ChEBI" id="CHEBI:15378"/>
        <dbReference type="ChEBI" id="CHEBI:37565"/>
        <dbReference type="ChEBI" id="CHEBI:43474"/>
        <dbReference type="ChEBI" id="CHEBI:58189"/>
        <dbReference type="EC" id="3.6.5.3"/>
    </reaction>
    <physiologicalReaction direction="left-to-right" evidence="2">
        <dbReference type="Rhea" id="RHEA:19670"/>
    </physiologicalReaction>
</comment>
<comment type="subunit">
    <text evidence="2">Monomer.</text>
</comment>
<comment type="subcellular location">
    <subcellularLocation>
        <location evidence="2">Cytoplasm</location>
    </subcellularLocation>
</comment>
<comment type="similarity">
    <text evidence="2">Belongs to the TRAFAC class translation factor GTPase superfamily. Classic translation factor GTPase family. EF-Tu/EF-1A subfamily.</text>
</comment>
<gene>
    <name evidence="2" type="primary">tuf</name>
    <name type="ordered locus">FTM_0201</name>
</gene>
<reference key="1">
    <citation type="journal article" date="2009" name="PLoS Pathog.">
        <title>Molecular evolutionary consequences of niche restriction in Francisella tularensis, a facultative intracellular pathogen.</title>
        <authorList>
            <person name="Larsson P."/>
            <person name="Elfsmark D."/>
            <person name="Svensson K."/>
            <person name="Wikstroem P."/>
            <person name="Forsman M."/>
            <person name="Brettin T."/>
            <person name="Keim P."/>
            <person name="Johansson A."/>
        </authorList>
    </citation>
    <scope>NUCLEOTIDE SEQUENCE [LARGE SCALE GENOMIC DNA]</scope>
    <source>
        <strain>FSC147</strain>
    </source>
</reference>
<name>EFTU_FRATM</name>